<proteinExistence type="evidence at protein level"/>
<evidence type="ECO:0000250" key="1"/>
<evidence type="ECO:0000250" key="2">
    <source>
        <dbReference type="UniProtKB" id="Q07820"/>
    </source>
</evidence>
<evidence type="ECO:0000255" key="3"/>
<evidence type="ECO:0000256" key="4">
    <source>
        <dbReference type="SAM" id="MobiDB-lite"/>
    </source>
</evidence>
<evidence type="ECO:0000269" key="5">
    <source>
    </source>
</evidence>
<evidence type="ECO:0000269" key="6">
    <source>
    </source>
</evidence>
<evidence type="ECO:0000269" key="7">
    <source>
    </source>
</evidence>
<evidence type="ECO:0000269" key="8">
    <source>
    </source>
</evidence>
<evidence type="ECO:0000269" key="9">
    <source>
    </source>
</evidence>
<evidence type="ECO:0000269" key="10">
    <source>
    </source>
</evidence>
<evidence type="ECO:0000269" key="11">
    <source>
    </source>
</evidence>
<evidence type="ECO:0000269" key="12">
    <source>
    </source>
</evidence>
<evidence type="ECO:0000269" key="13">
    <source>
    </source>
</evidence>
<evidence type="ECO:0000303" key="14">
    <source>
    </source>
</evidence>
<evidence type="ECO:0000305" key="15"/>
<evidence type="ECO:0007829" key="16">
    <source>
        <dbReference type="PDB" id="2NL9"/>
    </source>
</evidence>
<evidence type="ECO:0007829" key="17">
    <source>
        <dbReference type="PDB" id="2ROC"/>
    </source>
</evidence>
<evidence type="ECO:0007829" key="18">
    <source>
        <dbReference type="PDB" id="4G35"/>
    </source>
</evidence>
<evidence type="ECO:0007829" key="19">
    <source>
        <dbReference type="PDB" id="5VX2"/>
    </source>
</evidence>
<evidence type="ECO:0007829" key="20">
    <source>
        <dbReference type="PDB" id="6DM8"/>
    </source>
</evidence>
<keyword id="KW-0002">3D-structure</keyword>
<keyword id="KW-0025">Alternative splicing</keyword>
<keyword id="KW-0053">Apoptosis</keyword>
<keyword id="KW-0963">Cytoplasm</keyword>
<keyword id="KW-0217">Developmental protein</keyword>
<keyword id="KW-0221">Differentiation</keyword>
<keyword id="KW-1017">Isopeptide bond</keyword>
<keyword id="KW-0472">Membrane</keyword>
<keyword id="KW-0496">Mitochondrion</keyword>
<keyword id="KW-0539">Nucleus</keyword>
<keyword id="KW-0597">Phosphoprotein</keyword>
<keyword id="KW-1185">Reference proteome</keyword>
<keyword id="KW-0812">Transmembrane</keyword>
<keyword id="KW-1133">Transmembrane helix</keyword>
<keyword id="KW-0832">Ubl conjugation</keyword>
<sequence>MFGLRRNAVIGLNLYCGGASLGAGGGSPAGARLVAEEAKARREGGGEAALLPGARVVARPPPVGAEDPDVTASAERRLHKSPGLLAVPPEEMAASAAAAIVSPEEELDGCEPEAIGKRPAVLPLLERVSEAAKSSGADGSLPSTPPPPEEEEDDLYRQSLEIISRYLREQATGSKDSKPLGEAGAAGRRALETLRRVGDGVQRNHETAFQGMLRKLDIKNEGDVKSFSRVMVHVFKDGVTNWGRIVTLISFGAFVAKHLKSVNQESFIEPLAETITDVLVRTKRDWLVKQRGWDGFVEFFHVQDLEGGIRNVLLAFAGVAGVGAGLAYLIR</sequence>
<feature type="chain" id="PRO_0000143081" description="Induced myeloid leukemia cell differentiation protein Mcl-1 homolog">
    <location>
        <begin position="1"/>
        <end position="331"/>
    </location>
</feature>
<feature type="transmembrane region" description="Helical" evidence="3">
    <location>
        <begin position="308"/>
        <end position="330"/>
    </location>
</feature>
<feature type="region of interest" description="PEST-like" evidence="1">
    <location>
        <begin position="85"/>
        <end position="156"/>
    </location>
</feature>
<feature type="region of interest" description="Disordered" evidence="4">
    <location>
        <begin position="130"/>
        <end position="154"/>
    </location>
</feature>
<feature type="short sequence motif" description="BH3">
    <location>
        <begin position="190"/>
        <end position="204"/>
    </location>
</feature>
<feature type="short sequence motif" description="BH1">
    <location>
        <begin position="234"/>
        <end position="253"/>
    </location>
</feature>
<feature type="short sequence motif" description="BH2">
    <location>
        <begin position="285"/>
        <end position="300"/>
    </location>
</feature>
<feature type="site" description="Cleavage; by caspase-3" evidence="1">
    <location>
        <begin position="108"/>
        <end position="109"/>
    </location>
</feature>
<feature type="site" description="Cleavage; by caspase-3" evidence="1">
    <location>
        <begin position="138"/>
        <end position="139"/>
    </location>
</feature>
<feature type="modified residue" description="Phosphoserine" evidence="2">
    <location>
        <position position="102"/>
    </location>
</feature>
<feature type="modified residue" description="Phosphoserine; by GSK3-alpha and GSK3-beta" evidence="6">
    <location>
        <position position="140"/>
    </location>
</feature>
<feature type="modified residue" description="Phosphoserine" evidence="2">
    <location>
        <position position="143"/>
    </location>
</feature>
<feature type="modified residue" description="Phosphothreonine; by MAPK" evidence="2">
    <location>
        <position position="144"/>
    </location>
</feature>
<feature type="cross-link" description="Glycyl lysine isopeptide (Lys-Gly) (interchain with G-Cter in ubiquitin)" evidence="2">
    <location>
        <position position="117"/>
    </location>
</feature>
<feature type="cross-link" description="Glycyl lysine isopeptide (Lys-Gly) (interchain with G-Cter in ubiquitin)" evidence="2">
    <location>
        <position position="175"/>
    </location>
</feature>
<feature type="cross-link" description="Glycyl lysine isopeptide (Lys-Gly) (interchain with G-Cter in ubiquitin)" evidence="2">
    <location>
        <position position="178"/>
    </location>
</feature>
<feature type="splice variant" id="VSP_046443" description="In isoform 2." evidence="14">
    <location>
        <begin position="18"/>
        <end position="63"/>
    </location>
</feature>
<feature type="helix" evidence="16">
    <location>
        <begin position="154"/>
        <end position="172"/>
    </location>
</feature>
<feature type="strand" evidence="19">
    <location>
        <begin position="181"/>
        <end position="183"/>
    </location>
</feature>
<feature type="helix" evidence="16">
    <location>
        <begin position="185"/>
        <end position="202"/>
    </location>
</feature>
<feature type="helix" evidence="16">
    <location>
        <begin position="206"/>
        <end position="216"/>
    </location>
</feature>
<feature type="helix" evidence="20">
    <location>
        <begin position="221"/>
        <end position="225"/>
    </location>
</feature>
<feature type="helix" evidence="18">
    <location>
        <begin position="227"/>
        <end position="234"/>
    </location>
</feature>
<feature type="turn" evidence="18">
    <location>
        <begin position="235"/>
        <end position="237"/>
    </location>
</feature>
<feature type="helix" evidence="18">
    <location>
        <begin position="242"/>
        <end position="261"/>
    </location>
</feature>
<feature type="helix" evidence="18">
    <location>
        <begin position="265"/>
        <end position="267"/>
    </location>
</feature>
<feature type="helix" evidence="18">
    <location>
        <begin position="268"/>
        <end position="289"/>
    </location>
</feature>
<feature type="helix" evidence="18">
    <location>
        <begin position="292"/>
        <end position="300"/>
    </location>
</feature>
<feature type="turn" evidence="17">
    <location>
        <begin position="301"/>
        <end position="303"/>
    </location>
</feature>
<name>MCL1_MOUSE</name>
<accession>P97287</accession>
<accession>D2K6L9</accession>
<accession>Q3TUS0</accession>
<accession>Q792P0</accession>
<accession>Q9CRI4</accession>
<gene>
    <name type="primary">Mcl1</name>
</gene>
<dbReference type="EMBL" id="U35623">
    <property type="protein sequence ID" value="AAC31790.1"/>
    <property type="molecule type" value="mRNA"/>
</dbReference>
<dbReference type="EMBL" id="GU182318">
    <property type="protein sequence ID" value="ACZ54910.1"/>
    <property type="molecule type" value="mRNA"/>
</dbReference>
<dbReference type="EMBL" id="AK010424">
    <property type="protein sequence ID" value="BAB26927.1"/>
    <property type="molecule type" value="mRNA"/>
</dbReference>
<dbReference type="EMBL" id="AK159504">
    <property type="protein sequence ID" value="BAE35137.1"/>
    <property type="molecule type" value="mRNA"/>
</dbReference>
<dbReference type="EMBL" id="AK160594">
    <property type="protein sequence ID" value="BAE35901.1"/>
    <property type="molecule type" value="mRNA"/>
</dbReference>
<dbReference type="EMBL" id="AC092479">
    <property type="status" value="NOT_ANNOTATED_CDS"/>
    <property type="molecule type" value="Genomic_DNA"/>
</dbReference>
<dbReference type="EMBL" id="FO082281">
    <property type="status" value="NOT_ANNOTATED_CDS"/>
    <property type="molecule type" value="Genomic_DNA"/>
</dbReference>
<dbReference type="EMBL" id="BC003839">
    <property type="protein sequence ID" value="AAH03839.1"/>
    <property type="molecule type" value="mRNA"/>
</dbReference>
<dbReference type="EMBL" id="BC005427">
    <property type="protein sequence ID" value="AAH05427.1"/>
    <property type="molecule type" value="mRNA"/>
</dbReference>
<dbReference type="EMBL" id="BC021638">
    <property type="protein sequence ID" value="AAH21638.1"/>
    <property type="molecule type" value="mRNA"/>
</dbReference>
<dbReference type="EMBL" id="AF063886">
    <property type="protein sequence ID" value="AAC27929.1"/>
    <property type="molecule type" value="Genomic_DNA"/>
</dbReference>
<dbReference type="CCDS" id="CCDS57236.1">
    <molecule id="P97287-1"/>
</dbReference>
<dbReference type="RefSeq" id="NP_032588.1">
    <molecule id="P97287-1"/>
    <property type="nucleotide sequence ID" value="NM_008562.3"/>
</dbReference>
<dbReference type="PDB" id="1WSX">
    <property type="method" value="NMR"/>
    <property type="chains" value="A=152-308"/>
</dbReference>
<dbReference type="PDB" id="2JM6">
    <property type="method" value="NMR"/>
    <property type="chains" value="B=152-308"/>
</dbReference>
<dbReference type="PDB" id="2NL9">
    <property type="method" value="X-ray"/>
    <property type="resolution" value="1.55 A"/>
    <property type="chains" value="A=152-189"/>
</dbReference>
<dbReference type="PDB" id="2NLA">
    <property type="method" value="X-ray"/>
    <property type="resolution" value="2.80 A"/>
    <property type="chains" value="A=152-189"/>
</dbReference>
<dbReference type="PDB" id="2ROC">
    <property type="method" value="NMR"/>
    <property type="chains" value="A=152-308"/>
</dbReference>
<dbReference type="PDB" id="2ROD">
    <property type="method" value="NMR"/>
    <property type="chains" value="A=152-308"/>
</dbReference>
<dbReference type="PDB" id="3D7V">
    <property type="method" value="X-ray"/>
    <property type="resolution" value="2.03 A"/>
    <property type="chains" value="A=152-189"/>
</dbReference>
<dbReference type="PDB" id="3IO9">
    <property type="method" value="X-ray"/>
    <property type="resolution" value="2.40 A"/>
    <property type="chains" value="A=152-189"/>
</dbReference>
<dbReference type="PDB" id="4BPI">
    <property type="method" value="X-ray"/>
    <property type="resolution" value="1.98 A"/>
    <property type="chains" value="A=152-189"/>
</dbReference>
<dbReference type="PDB" id="4BPJ">
    <property type="method" value="X-ray"/>
    <property type="resolution" value="1.60 A"/>
    <property type="chains" value="A=152-189"/>
</dbReference>
<dbReference type="PDB" id="4G35">
    <property type="method" value="X-ray"/>
    <property type="resolution" value="2.00 A"/>
    <property type="chains" value="A=152-308"/>
</dbReference>
<dbReference type="PDB" id="5KU9">
    <property type="method" value="X-ray"/>
    <property type="resolution" value="2.20 A"/>
    <property type="chains" value="A/B=152-308"/>
</dbReference>
<dbReference type="PDB" id="5MES">
    <property type="method" value="X-ray"/>
    <property type="resolution" value="2.24 A"/>
    <property type="chains" value="A=153-221"/>
</dbReference>
<dbReference type="PDB" id="5MEV">
    <property type="method" value="X-ray"/>
    <property type="resolution" value="2.94 A"/>
    <property type="chains" value="A=153-221"/>
</dbReference>
<dbReference type="PDB" id="5VX2">
    <property type="method" value="X-ray"/>
    <property type="resolution" value="1.85 A"/>
    <property type="chains" value="A/C=152-221"/>
</dbReference>
<dbReference type="PDB" id="6DM8">
    <property type="method" value="X-ray"/>
    <property type="resolution" value="2.70 A"/>
    <property type="chains" value="A/B/C/D/E/F/G/H=154-302"/>
</dbReference>
<dbReference type="PDBsum" id="1WSX"/>
<dbReference type="PDBsum" id="2JM6"/>
<dbReference type="PDBsum" id="2NL9"/>
<dbReference type="PDBsum" id="2NLA"/>
<dbReference type="PDBsum" id="2ROC"/>
<dbReference type="PDBsum" id="2ROD"/>
<dbReference type="PDBsum" id="3D7V"/>
<dbReference type="PDBsum" id="3IO9"/>
<dbReference type="PDBsum" id="4BPI"/>
<dbReference type="PDBsum" id="4BPJ"/>
<dbReference type="PDBsum" id="4G35"/>
<dbReference type="PDBsum" id="5KU9"/>
<dbReference type="PDBsum" id="5MES"/>
<dbReference type="PDBsum" id="5MEV"/>
<dbReference type="PDBsum" id="5VX2"/>
<dbReference type="PDBsum" id="6DM8"/>
<dbReference type="SMR" id="P97287"/>
<dbReference type="BioGRID" id="201344">
    <property type="interactions" value="20"/>
</dbReference>
<dbReference type="ComplexPortal" id="CPX-305">
    <property type="entry name" value="MCL1:PMAIP1 complex"/>
</dbReference>
<dbReference type="ComplexPortal" id="CPX-629">
    <property type="entry name" value="MCL-1-BIM complex"/>
</dbReference>
<dbReference type="CORUM" id="P97287"/>
<dbReference type="DIP" id="DIP-33343N"/>
<dbReference type="ELM" id="P97287"/>
<dbReference type="FunCoup" id="P97287">
    <property type="interactions" value="1525"/>
</dbReference>
<dbReference type="IntAct" id="P97287">
    <property type="interactions" value="19"/>
</dbReference>
<dbReference type="MINT" id="P97287"/>
<dbReference type="STRING" id="10090.ENSMUSP00000044048"/>
<dbReference type="BindingDB" id="P97287"/>
<dbReference type="ChEMBL" id="CHEMBL5768"/>
<dbReference type="iPTMnet" id="P97287"/>
<dbReference type="PhosphoSitePlus" id="P97287"/>
<dbReference type="jPOST" id="P97287"/>
<dbReference type="PaxDb" id="10090-ENSMUSP00000044048"/>
<dbReference type="PeptideAtlas" id="P97287"/>
<dbReference type="ProteomicsDB" id="252747">
    <molecule id="P97287-1"/>
</dbReference>
<dbReference type="ProteomicsDB" id="252748">
    <molecule id="P97287-2"/>
</dbReference>
<dbReference type="Pumba" id="P97287"/>
<dbReference type="ABCD" id="P97287">
    <property type="antibodies" value="1 sequenced antibody"/>
</dbReference>
<dbReference type="Antibodypedia" id="1508">
    <property type="antibodies" value="1453 antibodies from 49 providers"/>
</dbReference>
<dbReference type="DNASU" id="17210"/>
<dbReference type="Ensembl" id="ENSMUST00000037947.15">
    <molecule id="P97287-1"/>
    <property type="protein sequence ID" value="ENSMUSP00000044048.9"/>
    <property type="gene ID" value="ENSMUSG00000038612.17"/>
</dbReference>
<dbReference type="Ensembl" id="ENSMUST00000178686.2">
    <molecule id="P97287-2"/>
    <property type="protein sequence ID" value="ENSMUSP00000135915.2"/>
    <property type="gene ID" value="ENSMUSG00000038612.17"/>
</dbReference>
<dbReference type="GeneID" id="17210"/>
<dbReference type="KEGG" id="mmu:17210"/>
<dbReference type="UCSC" id="uc029unp.1">
    <molecule id="P97287-1"/>
    <property type="organism name" value="mouse"/>
</dbReference>
<dbReference type="AGR" id="MGI:101769"/>
<dbReference type="CTD" id="4170"/>
<dbReference type="MGI" id="MGI:101769">
    <property type="gene designation" value="Mcl1"/>
</dbReference>
<dbReference type="VEuPathDB" id="HostDB:ENSMUSG00000038612"/>
<dbReference type="eggNOG" id="KOG4728">
    <property type="taxonomic scope" value="Eukaryota"/>
</dbReference>
<dbReference type="GeneTree" id="ENSGT01130000278292"/>
<dbReference type="HOGENOM" id="CLU_046711_0_0_1"/>
<dbReference type="InParanoid" id="P97287"/>
<dbReference type="OMA" id="FFAPTRC"/>
<dbReference type="OrthoDB" id="8932147at2759"/>
<dbReference type="PhylomeDB" id="P97287"/>
<dbReference type="TreeFam" id="TF315834"/>
<dbReference type="BioGRID-ORCS" id="17210">
    <property type="hits" value="21 hits in 80 CRISPR screens"/>
</dbReference>
<dbReference type="ChiTaRS" id="Mcl1">
    <property type="organism name" value="mouse"/>
</dbReference>
<dbReference type="EvolutionaryTrace" id="P97287"/>
<dbReference type="PRO" id="PR:P97287"/>
<dbReference type="Proteomes" id="UP000000589">
    <property type="component" value="Chromosome 3"/>
</dbReference>
<dbReference type="RNAct" id="P97287">
    <property type="molecule type" value="protein"/>
</dbReference>
<dbReference type="Bgee" id="ENSMUSG00000038612">
    <property type="expression patterns" value="Expressed in otic placode and 267 other cell types or tissues"/>
</dbReference>
<dbReference type="GO" id="GO:0097136">
    <property type="term" value="C:Bcl-2 family protein complex"/>
    <property type="evidence" value="ECO:0000266"/>
    <property type="project" value="ComplexPortal"/>
</dbReference>
<dbReference type="GO" id="GO:0005737">
    <property type="term" value="C:cytoplasm"/>
    <property type="evidence" value="ECO:0000314"/>
    <property type="project" value="MGI"/>
</dbReference>
<dbReference type="GO" id="GO:0005829">
    <property type="term" value="C:cytosol"/>
    <property type="evidence" value="ECO:0000314"/>
    <property type="project" value="UniProtKB"/>
</dbReference>
<dbReference type="GO" id="GO:0016020">
    <property type="term" value="C:membrane"/>
    <property type="evidence" value="ECO:0000314"/>
    <property type="project" value="UniProtKB"/>
</dbReference>
<dbReference type="GO" id="GO:0005759">
    <property type="term" value="C:mitochondrial matrix"/>
    <property type="evidence" value="ECO:0000314"/>
    <property type="project" value="MGI"/>
</dbReference>
<dbReference type="GO" id="GO:0005739">
    <property type="term" value="C:mitochondrion"/>
    <property type="evidence" value="ECO:0000314"/>
    <property type="project" value="ParkinsonsUK-UCL"/>
</dbReference>
<dbReference type="GO" id="GO:0005654">
    <property type="term" value="C:nucleoplasm"/>
    <property type="evidence" value="ECO:0007669"/>
    <property type="project" value="UniProtKB-SubCell"/>
</dbReference>
<dbReference type="GO" id="GO:0005634">
    <property type="term" value="C:nucleus"/>
    <property type="evidence" value="ECO:0000314"/>
    <property type="project" value="MGI"/>
</dbReference>
<dbReference type="GO" id="GO:0051434">
    <property type="term" value="F:BH3 domain binding"/>
    <property type="evidence" value="ECO:0000353"/>
    <property type="project" value="UniProtKB"/>
</dbReference>
<dbReference type="GO" id="GO:0046982">
    <property type="term" value="F:protein heterodimerization activity"/>
    <property type="evidence" value="ECO:0007669"/>
    <property type="project" value="Ensembl"/>
</dbReference>
<dbReference type="GO" id="GO:0008637">
    <property type="term" value="P:apoptotic mitochondrial changes"/>
    <property type="evidence" value="ECO:0000314"/>
    <property type="project" value="MGI"/>
</dbReference>
<dbReference type="GO" id="GO:0030154">
    <property type="term" value="P:cell differentiation"/>
    <property type="evidence" value="ECO:0007669"/>
    <property type="project" value="UniProtKB-KW"/>
</dbReference>
<dbReference type="GO" id="GO:0006974">
    <property type="term" value="P:DNA damage response"/>
    <property type="evidence" value="ECO:0000266"/>
    <property type="project" value="MGI"/>
</dbReference>
<dbReference type="GO" id="GO:0097192">
    <property type="term" value="P:extrinsic apoptotic signaling pathway in absence of ligand"/>
    <property type="evidence" value="ECO:0000315"/>
    <property type="project" value="UniProtKB"/>
</dbReference>
<dbReference type="GO" id="GO:0008630">
    <property type="term" value="P:intrinsic apoptotic signaling pathway in response to DNA damage"/>
    <property type="evidence" value="ECO:0000314"/>
    <property type="project" value="MGI"/>
</dbReference>
<dbReference type="GO" id="GO:2000811">
    <property type="term" value="P:negative regulation of anoikis"/>
    <property type="evidence" value="ECO:0007669"/>
    <property type="project" value="Ensembl"/>
</dbReference>
<dbReference type="GO" id="GO:0043066">
    <property type="term" value="P:negative regulation of apoptotic process"/>
    <property type="evidence" value="ECO:0000315"/>
    <property type="project" value="UniProtKB"/>
</dbReference>
<dbReference type="GO" id="GO:0010507">
    <property type="term" value="P:negative regulation of autophagy"/>
    <property type="evidence" value="ECO:0007669"/>
    <property type="project" value="Ensembl"/>
</dbReference>
<dbReference type="GO" id="GO:2001240">
    <property type="term" value="P:negative regulation of extrinsic apoptotic signaling pathway in absence of ligand"/>
    <property type="evidence" value="ECO:0007669"/>
    <property type="project" value="Ensembl"/>
</dbReference>
<dbReference type="GO" id="GO:0043065">
    <property type="term" value="P:positive regulation of apoptotic process"/>
    <property type="evidence" value="ECO:0000303"/>
    <property type="project" value="ComplexPortal"/>
</dbReference>
<dbReference type="GO" id="GO:1903378">
    <property type="term" value="P:positive regulation of oxidative stress-induced neuron intrinsic apoptotic signaling pathway"/>
    <property type="evidence" value="ECO:0000315"/>
    <property type="project" value="ParkinsonsUK-UCL"/>
</dbReference>
<dbReference type="GO" id="GO:0042981">
    <property type="term" value="P:regulation of apoptotic process"/>
    <property type="evidence" value="ECO:0000266"/>
    <property type="project" value="ComplexPortal"/>
</dbReference>
<dbReference type="GO" id="GO:0034097">
    <property type="term" value="P:response to cytokine"/>
    <property type="evidence" value="ECO:0000266"/>
    <property type="project" value="MGI"/>
</dbReference>
<dbReference type="CDD" id="cd06845">
    <property type="entry name" value="Bcl-2_like"/>
    <property type="match status" value="1"/>
</dbReference>
<dbReference type="FunFam" id="1.10.437.10:FF:000002">
    <property type="entry name" value="Induced myeloid leukemia cell differentiation protein Mcl-1"/>
    <property type="match status" value="1"/>
</dbReference>
<dbReference type="Gene3D" id="1.10.437.10">
    <property type="entry name" value="Blc2-like"/>
    <property type="match status" value="1"/>
</dbReference>
<dbReference type="InterPro" id="IPR013281">
    <property type="entry name" value="Apop_reg_Mc1"/>
</dbReference>
<dbReference type="InterPro" id="IPR036834">
    <property type="entry name" value="Bcl-2-like_sf"/>
</dbReference>
<dbReference type="InterPro" id="IPR046371">
    <property type="entry name" value="Bcl-2_BH1-3"/>
</dbReference>
<dbReference type="InterPro" id="IPR026298">
    <property type="entry name" value="Bcl-2_fam"/>
</dbReference>
<dbReference type="InterPro" id="IPR002475">
    <property type="entry name" value="Bcl2-like"/>
</dbReference>
<dbReference type="InterPro" id="IPR020717">
    <property type="entry name" value="Bcl2_BH1_motif_CS"/>
</dbReference>
<dbReference type="InterPro" id="IPR020726">
    <property type="entry name" value="Bcl2_BH2_motif_CS"/>
</dbReference>
<dbReference type="InterPro" id="IPR020728">
    <property type="entry name" value="Bcl2_BH3_motif_CS"/>
</dbReference>
<dbReference type="PANTHER" id="PTHR11256">
    <property type="entry name" value="BCL-2 RELATED"/>
    <property type="match status" value="1"/>
</dbReference>
<dbReference type="PANTHER" id="PTHR11256:SF46">
    <property type="entry name" value="INDUCED MYELOID LEUKEMIA CELL DIFFERENTIATION PROTEIN MCL-1"/>
    <property type="match status" value="1"/>
</dbReference>
<dbReference type="Pfam" id="PF00452">
    <property type="entry name" value="Bcl-2"/>
    <property type="match status" value="1"/>
</dbReference>
<dbReference type="PRINTS" id="PR01866">
    <property type="entry name" value="APOPREGMCL1"/>
</dbReference>
<dbReference type="PRINTS" id="PR01862">
    <property type="entry name" value="BCL2FAMILY"/>
</dbReference>
<dbReference type="SMART" id="SM00337">
    <property type="entry name" value="BCL"/>
    <property type="match status" value="1"/>
</dbReference>
<dbReference type="SUPFAM" id="SSF56854">
    <property type="entry name" value="Bcl-2 inhibitors of programmed cell death"/>
    <property type="match status" value="1"/>
</dbReference>
<dbReference type="PROSITE" id="PS50062">
    <property type="entry name" value="BCL2_FAMILY"/>
    <property type="match status" value="1"/>
</dbReference>
<dbReference type="PROSITE" id="PS01080">
    <property type="entry name" value="BH1"/>
    <property type="match status" value="1"/>
</dbReference>
<dbReference type="PROSITE" id="PS01258">
    <property type="entry name" value="BH2"/>
    <property type="match status" value="1"/>
</dbReference>
<dbReference type="PROSITE" id="PS01259">
    <property type="entry name" value="BH3"/>
    <property type="match status" value="1"/>
</dbReference>
<organism>
    <name type="scientific">Mus musculus</name>
    <name type="common">Mouse</name>
    <dbReference type="NCBI Taxonomy" id="10090"/>
    <lineage>
        <taxon>Eukaryota</taxon>
        <taxon>Metazoa</taxon>
        <taxon>Chordata</taxon>
        <taxon>Craniata</taxon>
        <taxon>Vertebrata</taxon>
        <taxon>Euteleostomi</taxon>
        <taxon>Mammalia</taxon>
        <taxon>Eutheria</taxon>
        <taxon>Euarchontoglires</taxon>
        <taxon>Glires</taxon>
        <taxon>Rodentia</taxon>
        <taxon>Myomorpha</taxon>
        <taxon>Muroidea</taxon>
        <taxon>Muridae</taxon>
        <taxon>Murinae</taxon>
        <taxon>Mus</taxon>
        <taxon>Mus</taxon>
    </lineage>
</organism>
<reference key="1">
    <citation type="journal article" date="1998" name="Biochim. Biophys. Acta">
        <title>Up-regulated expression of murine Mcl1/EAT, a bcl-2 related gene, in the early stage of differentiation of murine embryonal carcinoma cells and embryonic stem cells.</title>
        <authorList>
            <person name="Okita H."/>
            <person name="Umezawa A."/>
            <person name="Suzuki A."/>
            <person name="Hata J."/>
        </authorList>
    </citation>
    <scope>NUCLEOTIDE SEQUENCE [MRNA] (ISOFORM 1)</scope>
    <scope>INDUCTION</scope>
    <source>
        <tissue>Fetus</tissue>
    </source>
</reference>
<reference key="2">
    <citation type="journal article" date="2010" name="Biochem. Biophys. Res. Commun.">
        <title>MCL-1V, a novel mouse antiapoptotic MCL-1 variant, generated by RNA splicing at a non-canonical splicing pair.</title>
        <authorList>
            <person name="Kojima S."/>
            <person name="Hyakutake A."/>
            <person name="Koshikawa N."/>
            <person name="Nakagawara A."/>
            <person name="Takenaga K."/>
        </authorList>
    </citation>
    <scope>NUCLEOTIDE SEQUENCE [MRNA] (ISOFORM 2)</scope>
    <scope>FUNCTION</scope>
    <scope>SUBCELLULAR LOCALIZATION</scope>
    <source>
        <strain>C57BL/6J</strain>
    </source>
</reference>
<reference key="3">
    <citation type="journal article" date="2005" name="Science">
        <title>The transcriptional landscape of the mammalian genome.</title>
        <authorList>
            <person name="Carninci P."/>
            <person name="Kasukawa T."/>
            <person name="Katayama S."/>
            <person name="Gough J."/>
            <person name="Frith M.C."/>
            <person name="Maeda N."/>
            <person name="Oyama R."/>
            <person name="Ravasi T."/>
            <person name="Lenhard B."/>
            <person name="Wells C."/>
            <person name="Kodzius R."/>
            <person name="Shimokawa K."/>
            <person name="Bajic V.B."/>
            <person name="Brenner S.E."/>
            <person name="Batalov S."/>
            <person name="Forrest A.R."/>
            <person name="Zavolan M."/>
            <person name="Davis M.J."/>
            <person name="Wilming L.G."/>
            <person name="Aidinis V."/>
            <person name="Allen J.E."/>
            <person name="Ambesi-Impiombato A."/>
            <person name="Apweiler R."/>
            <person name="Aturaliya R.N."/>
            <person name="Bailey T.L."/>
            <person name="Bansal M."/>
            <person name="Baxter L."/>
            <person name="Beisel K.W."/>
            <person name="Bersano T."/>
            <person name="Bono H."/>
            <person name="Chalk A.M."/>
            <person name="Chiu K.P."/>
            <person name="Choudhary V."/>
            <person name="Christoffels A."/>
            <person name="Clutterbuck D.R."/>
            <person name="Crowe M.L."/>
            <person name="Dalla E."/>
            <person name="Dalrymple B.P."/>
            <person name="de Bono B."/>
            <person name="Della Gatta G."/>
            <person name="di Bernardo D."/>
            <person name="Down T."/>
            <person name="Engstrom P."/>
            <person name="Fagiolini M."/>
            <person name="Faulkner G."/>
            <person name="Fletcher C.F."/>
            <person name="Fukushima T."/>
            <person name="Furuno M."/>
            <person name="Futaki S."/>
            <person name="Gariboldi M."/>
            <person name="Georgii-Hemming P."/>
            <person name="Gingeras T.R."/>
            <person name="Gojobori T."/>
            <person name="Green R.E."/>
            <person name="Gustincich S."/>
            <person name="Harbers M."/>
            <person name="Hayashi Y."/>
            <person name="Hensch T.K."/>
            <person name="Hirokawa N."/>
            <person name="Hill D."/>
            <person name="Huminiecki L."/>
            <person name="Iacono M."/>
            <person name="Ikeo K."/>
            <person name="Iwama A."/>
            <person name="Ishikawa T."/>
            <person name="Jakt M."/>
            <person name="Kanapin A."/>
            <person name="Katoh M."/>
            <person name="Kawasawa Y."/>
            <person name="Kelso J."/>
            <person name="Kitamura H."/>
            <person name="Kitano H."/>
            <person name="Kollias G."/>
            <person name="Krishnan S.P."/>
            <person name="Kruger A."/>
            <person name="Kummerfeld S.K."/>
            <person name="Kurochkin I.V."/>
            <person name="Lareau L.F."/>
            <person name="Lazarevic D."/>
            <person name="Lipovich L."/>
            <person name="Liu J."/>
            <person name="Liuni S."/>
            <person name="McWilliam S."/>
            <person name="Madan Babu M."/>
            <person name="Madera M."/>
            <person name="Marchionni L."/>
            <person name="Matsuda H."/>
            <person name="Matsuzawa S."/>
            <person name="Miki H."/>
            <person name="Mignone F."/>
            <person name="Miyake S."/>
            <person name="Morris K."/>
            <person name="Mottagui-Tabar S."/>
            <person name="Mulder N."/>
            <person name="Nakano N."/>
            <person name="Nakauchi H."/>
            <person name="Ng P."/>
            <person name="Nilsson R."/>
            <person name="Nishiguchi S."/>
            <person name="Nishikawa S."/>
            <person name="Nori F."/>
            <person name="Ohara O."/>
            <person name="Okazaki Y."/>
            <person name="Orlando V."/>
            <person name="Pang K.C."/>
            <person name="Pavan W.J."/>
            <person name="Pavesi G."/>
            <person name="Pesole G."/>
            <person name="Petrovsky N."/>
            <person name="Piazza S."/>
            <person name="Reed J."/>
            <person name="Reid J.F."/>
            <person name="Ring B.Z."/>
            <person name="Ringwald M."/>
            <person name="Rost B."/>
            <person name="Ruan Y."/>
            <person name="Salzberg S.L."/>
            <person name="Sandelin A."/>
            <person name="Schneider C."/>
            <person name="Schoenbach C."/>
            <person name="Sekiguchi K."/>
            <person name="Semple C.A."/>
            <person name="Seno S."/>
            <person name="Sessa L."/>
            <person name="Sheng Y."/>
            <person name="Shibata Y."/>
            <person name="Shimada H."/>
            <person name="Shimada K."/>
            <person name="Silva D."/>
            <person name="Sinclair B."/>
            <person name="Sperling S."/>
            <person name="Stupka E."/>
            <person name="Sugiura K."/>
            <person name="Sultana R."/>
            <person name="Takenaka Y."/>
            <person name="Taki K."/>
            <person name="Tammoja K."/>
            <person name="Tan S.L."/>
            <person name="Tang S."/>
            <person name="Taylor M.S."/>
            <person name="Tegner J."/>
            <person name="Teichmann S.A."/>
            <person name="Ueda H.R."/>
            <person name="van Nimwegen E."/>
            <person name="Verardo R."/>
            <person name="Wei C.L."/>
            <person name="Yagi K."/>
            <person name="Yamanishi H."/>
            <person name="Zabarovsky E."/>
            <person name="Zhu S."/>
            <person name="Zimmer A."/>
            <person name="Hide W."/>
            <person name="Bult C."/>
            <person name="Grimmond S.M."/>
            <person name="Teasdale R.D."/>
            <person name="Liu E.T."/>
            <person name="Brusic V."/>
            <person name="Quackenbush J."/>
            <person name="Wahlestedt C."/>
            <person name="Mattick J.S."/>
            <person name="Hume D.A."/>
            <person name="Kai C."/>
            <person name="Sasaki D."/>
            <person name="Tomaru Y."/>
            <person name="Fukuda S."/>
            <person name="Kanamori-Katayama M."/>
            <person name="Suzuki M."/>
            <person name="Aoki J."/>
            <person name="Arakawa T."/>
            <person name="Iida J."/>
            <person name="Imamura K."/>
            <person name="Itoh M."/>
            <person name="Kato T."/>
            <person name="Kawaji H."/>
            <person name="Kawagashira N."/>
            <person name="Kawashima T."/>
            <person name="Kojima M."/>
            <person name="Kondo S."/>
            <person name="Konno H."/>
            <person name="Nakano K."/>
            <person name="Ninomiya N."/>
            <person name="Nishio T."/>
            <person name="Okada M."/>
            <person name="Plessy C."/>
            <person name="Shibata K."/>
            <person name="Shiraki T."/>
            <person name="Suzuki S."/>
            <person name="Tagami M."/>
            <person name="Waki K."/>
            <person name="Watahiki A."/>
            <person name="Okamura-Oho Y."/>
            <person name="Suzuki H."/>
            <person name="Kawai J."/>
            <person name="Hayashizaki Y."/>
        </authorList>
    </citation>
    <scope>NUCLEOTIDE SEQUENCE [LARGE SCALE MRNA] (ISOFORM 1)</scope>
    <source>
        <strain>C57BL/6J</strain>
        <tissue>Embryo</tissue>
        <tissue>Embryonic stem cell</tissue>
    </source>
</reference>
<reference key="4">
    <citation type="journal article" date="2009" name="PLoS Biol.">
        <title>Lineage-specific biology revealed by a finished genome assembly of the mouse.</title>
        <authorList>
            <person name="Church D.M."/>
            <person name="Goodstadt L."/>
            <person name="Hillier L.W."/>
            <person name="Zody M.C."/>
            <person name="Goldstein S."/>
            <person name="She X."/>
            <person name="Bult C.J."/>
            <person name="Agarwala R."/>
            <person name="Cherry J.L."/>
            <person name="DiCuccio M."/>
            <person name="Hlavina W."/>
            <person name="Kapustin Y."/>
            <person name="Meric P."/>
            <person name="Maglott D."/>
            <person name="Birtle Z."/>
            <person name="Marques A.C."/>
            <person name="Graves T."/>
            <person name="Zhou S."/>
            <person name="Teague B."/>
            <person name="Potamousis K."/>
            <person name="Churas C."/>
            <person name="Place M."/>
            <person name="Herschleb J."/>
            <person name="Runnheim R."/>
            <person name="Forrest D."/>
            <person name="Amos-Landgraf J."/>
            <person name="Schwartz D.C."/>
            <person name="Cheng Z."/>
            <person name="Lindblad-Toh K."/>
            <person name="Eichler E.E."/>
            <person name="Ponting C.P."/>
        </authorList>
    </citation>
    <scope>NUCLEOTIDE SEQUENCE [LARGE SCALE GENOMIC DNA]</scope>
    <source>
        <strain>C57BL/6J</strain>
    </source>
</reference>
<reference key="5">
    <citation type="journal article" date="2004" name="Genome Res.">
        <title>The status, quality, and expansion of the NIH full-length cDNA project: the Mammalian Gene Collection (MGC).</title>
        <authorList>
            <consortium name="The MGC Project Team"/>
        </authorList>
    </citation>
    <scope>NUCLEOTIDE SEQUENCE [LARGE SCALE MRNA] (ISOFORM 1)</scope>
    <source>
        <strain>Czech II</strain>
        <strain>FVB/N</strain>
        <tissue>Mammary tumor</tissue>
        <tissue>Salivary gland</tissue>
    </source>
</reference>
<reference key="6">
    <citation type="journal article" date="1998" name="Mol. Cell. Biol.">
        <title>Mcl-1 is an immediate-early gene activated by the granulocyte-macrophage colony-stimulating factor (GM-CSF) signaling pathway and is one component of the GM-CSF viability response.</title>
        <authorList>
            <person name="Chao J.-R."/>
            <person name="Wang J.-M."/>
            <person name="Lee S.-F."/>
            <person name="Peng H.-W."/>
            <person name="Lin Y.-H."/>
            <person name="Chou C.-H."/>
            <person name="Li J.-C."/>
            <person name="Huang H.-M."/>
            <person name="Chou C.-K."/>
            <person name="Kuo M.-L."/>
            <person name="Yen J.J.-Y."/>
            <person name="Yang-Yen H.-F."/>
        </authorList>
    </citation>
    <scope>NUCLEOTIDE SEQUENCE [GENOMIC DNA] OF 1-65</scope>
    <scope>INDUCTION</scope>
    <source>
        <strain>129/SvJ</strain>
    </source>
</reference>
<reference key="7">
    <citation type="journal article" date="2006" name="Mol. Cell">
        <title>Glycogen synthase kinase-3 regulates mitochondrial outer membrane permeabilization and apoptosis by destabilization of MCL-1.</title>
        <authorList>
            <person name="Maurer U."/>
            <person name="Charvet C."/>
            <person name="Wagman A.S."/>
            <person name="Dejardin E."/>
            <person name="Green D.R."/>
        </authorList>
    </citation>
    <scope>FUNCTION AS INHIBITOR OF APOPTOSIS</scope>
    <scope>PHOSPHORYLATION AT SER-140 BY GSK3-ALPHA AND GSK3-BETA</scope>
    <scope>INTERACTION WITH BCL2L11</scope>
</reference>
<reference key="8">
    <citation type="journal article" date="2010" name="Cell">
        <title>A tissue-specific atlas of mouse protein phosphorylation and expression.</title>
        <authorList>
            <person name="Huttlin E.L."/>
            <person name="Jedrychowski M.P."/>
            <person name="Elias J.E."/>
            <person name="Goswami T."/>
            <person name="Rad R."/>
            <person name="Beausoleil S.A."/>
            <person name="Villen J."/>
            <person name="Haas W."/>
            <person name="Sowa M.E."/>
            <person name="Gygi S.P."/>
        </authorList>
    </citation>
    <scope>IDENTIFICATION BY MASS SPECTROMETRY [LARGE SCALE ANALYSIS]</scope>
    <source>
        <tissue>Lung</tissue>
        <tissue>Spleen</tissue>
        <tissue>Testis</tissue>
    </source>
</reference>
<reference key="9">
    <citation type="journal article" date="2011" name="Cell Death Differ.">
        <title>Pro-apoptotic activity of inhibitory PAS domain protein (IPAS), a negative regulator of HIF-1, through binding to pro-survival Bcl-2 family proteins.</title>
        <authorList>
            <person name="Torii S."/>
            <person name="Goto Y."/>
            <person name="Ishizawa T."/>
            <person name="Hoshi H."/>
            <person name="Goryo K."/>
            <person name="Yasumoto K."/>
            <person name="Fukumura H."/>
            <person name="Sogawa K."/>
        </authorList>
    </citation>
    <scope>INTERACTION WITH HIF3A</scope>
</reference>
<reference key="10">
    <citation type="journal article" date="2011" name="J. Exp. Med.">
        <title>Critical role for Gimap5 in the survival of mouse hematopoietic stem and progenitor cells.</title>
        <authorList>
            <person name="Chen Y."/>
            <person name="Yu M."/>
            <person name="Dai X."/>
            <person name="Zogg M."/>
            <person name="Wen R."/>
            <person name="Weiler H."/>
            <person name="Wang D."/>
        </authorList>
    </citation>
    <scope>INTERACTION WITH GIMAP5 AND HSPA8</scope>
</reference>
<reference key="11">
    <citation type="journal article" date="2016" name="EMBO Rep.">
        <title>The deubiquitinase Usp27x stabilizes the BH3-only protein Bim and enhances apoptosis.</title>
        <authorList>
            <person name="Weber A."/>
            <person name="Heinlein M."/>
            <person name="Dengjel J."/>
            <person name="Alber C."/>
            <person name="Singh P.K."/>
            <person name="Haecker G."/>
        </authorList>
    </citation>
    <scope>INTERACTION WITH BCL2L11</scope>
</reference>
<reference key="12">
    <citation type="journal article" date="2005" name="J. Biol. Chem.">
        <title>Solution structure of prosurvival Mcl-1 and characterization of its binding by proapoptotic BH3-only ligands.</title>
        <authorList>
            <person name="Day C.L."/>
            <person name="Chen L."/>
            <person name="Richardson S.J."/>
            <person name="Harrison P.J."/>
            <person name="Huang D.C.S."/>
            <person name="Hinds M.G."/>
        </authorList>
    </citation>
    <scope>STRUCTURE BY NMR OF 152-308</scope>
    <scope>INTERACTION WITH BCL2L11; BMF AND PMAIP</scope>
</reference>
<reference key="13">
    <citation type="journal article" date="2008" name="J. Mol. Biol.">
        <title>Structure of the BH3 domains from the p53-inducible BH3-only proteins Noxa and Puma in complex with Mcl-1.</title>
        <authorList>
            <person name="Day C.L."/>
            <person name="Smits C."/>
            <person name="Fan F.C."/>
            <person name="Lee E.F."/>
            <person name="Fairlie W.D."/>
            <person name="Hinds M.G."/>
        </authorList>
    </citation>
    <scope>STRUCTURE BY NMR OF 148-308 IN COMPLEXES WITH BBC3 AND PMAIP1</scope>
</reference>
<comment type="function">
    <text evidence="6 8">Involved in the regulation of apoptosis versus cell survival, and in the maintenance of viability but not of proliferation. Mediates its effects by interactions with a number of other regulators of apoptosis. Isoform 2 has antiapoptotic activity.</text>
</comment>
<comment type="subunit">
    <text evidence="5 6 7 9 10 11">Interacts with HIF3A isoform 2 (via C-terminus domain) (PubMed:21546903). Interacts with BAD, BOK, BIK, BAX, BAK1, and TPT1. Interacts with BBC3, BMF and PMAIP1 (PubMed:15550399, PubMed:18589438). Interacts with BOP. Interacts with BCL2L11; this interaction may sequester BCL2L11 and prevent its pro-apoptotic activity (PubMed:15550399, PubMed:16543145, PubMed:27013495). Interacts with GIMAP5 and HSPA8/HSC70; the interaction between HSPA8 and MCL1 is impaired in the absence of GIMAP5 (PubMed:21502331).</text>
</comment>
<comment type="interaction">
    <interactant intactId="EBI-707292">
        <id>P97287</id>
    </interactant>
    <interactant intactId="EBI-822441">
        <id>O08734</id>
        <label>Bak1</label>
    </interactant>
    <organismsDiffer>false</organismsDiffer>
    <experiments>2</experiments>
</comment>
<comment type="interaction">
    <interactant intactId="EBI-707292">
        <id>P97287</id>
    </interactant>
    <interactant intactId="EBI-727801">
        <id>Q99ML1</id>
        <label>Bbc3</label>
    </interactant>
    <organismsDiffer>false</organismsDiffer>
    <experiments>2</experiments>
</comment>
<comment type="interaction">
    <interactant intactId="EBI-707292">
        <id>P97287</id>
    </interactant>
    <interactant intactId="EBI-526067">
        <id>O54918</id>
        <label>Bcl2l11</label>
    </interactant>
    <organismsDiffer>false</organismsDiffer>
    <experiments>5</experiments>
</comment>
<comment type="interaction">
    <interactant intactId="EBI-707292">
        <id>P97287</id>
    </interactant>
    <interactant intactId="EBI-709183">
        <id>Q9JM54</id>
        <label>Pmaip1</label>
    </interactant>
    <organismsDiffer>false</organismsDiffer>
    <experiments>14</experiments>
</comment>
<comment type="interaction">
    <interactant intactId="EBI-707292">
        <id>P97287</id>
    </interactant>
    <interactant intactId="EBI-519866">
        <id>Q16611</id>
        <label>BAK1</label>
    </interactant>
    <organismsDiffer>true</organismsDiffer>
    <experiments>3</experiments>
</comment>
<comment type="interaction">
    <interactant intactId="EBI-707292">
        <id>P97287</id>
    </interactant>
    <interactant intactId="EBI-516580">
        <id>Q07812</id>
        <label>BAX</label>
    </interactant>
    <organismsDiffer>true</organismsDiffer>
    <experiments>2</experiments>
</comment>
<comment type="interaction">
    <interactant intactId="EBI-707292">
        <id>P97287</id>
    </interactant>
    <interactant intactId="EBI-519884">
        <id>Q9BXH1</id>
        <label>BBC3</label>
    </interactant>
    <organismsDiffer>true</organismsDiffer>
    <experiments>5</experiments>
</comment>
<comment type="interaction">
    <interactant intactId="EBI-707292">
        <id>P97287</id>
    </interactant>
    <interactant intactId="EBI-526406">
        <id>O43521</id>
        <label>BCL2L11</label>
    </interactant>
    <organismsDiffer>true</organismsDiffer>
    <experiments>7</experiments>
</comment>
<comment type="subcellular location">
    <subcellularLocation>
        <location evidence="1">Membrane</location>
        <topology evidence="1">Single-pass membrane protein</topology>
    </subcellularLocation>
    <subcellularLocation>
        <location evidence="1">Cytoplasm</location>
    </subcellularLocation>
    <subcellularLocation>
        <location>Mitochondrion</location>
    </subcellularLocation>
    <subcellularLocation>
        <location evidence="1">Nucleus</location>
        <location evidence="1">Nucleoplasm</location>
    </subcellularLocation>
    <text>Cytoplasmic, associated with mitochondria.</text>
</comment>
<comment type="alternative products">
    <event type="alternative splicing"/>
    <isoform>
        <id>P97287-1</id>
        <name>1</name>
        <sequence type="displayed"/>
    </isoform>
    <isoform>
        <id>P97287-2</id>
        <name>2</name>
        <name>Mck-1V</name>
        <sequence type="described" ref="VSP_046443"/>
    </isoform>
</comment>
<comment type="induction">
    <text evidence="12 13">Up-regulated by IL3 and CSF2. Up-regulated in murine embryonal carcinoma cells in response to retinoic acid treatment. Levels reach a maximum after 4 hours, are decreased after 8 hours and are back to maximum after 12 hours. Levels are decreased after 24 hours and back to basal levels after 48 hours. Expression remains constant in retinoic acid-treated embryonic stem cells.</text>
</comment>
<comment type="PTM">
    <text evidence="1">Cleaved by CASP3 during apoptosis, yielding a pro-apoptotic C-terminal fragment.</text>
</comment>
<comment type="PTM">
    <text evidence="1">Rapidly degraded in the absence of phosphorylation in the PEST region.</text>
</comment>
<comment type="PTM">
    <text evidence="6">Phosphorylated on Ser-140, by GSK3, in response to IL3/interleukin-3 withdrawal. Phosphorylation at Ser-140 induces ubiquitination and proteasomal degradation, abrogating the anti-apoptotic activity. Treatment with taxol or okadaic acid induces phosphorylation on additional sites.</text>
</comment>
<comment type="PTM">
    <text evidence="2">Ubiquitinated. Ubiquitination is induced by phosphorylation at Ser-140 (By similarity). Deubiquitinated by USP20; leading to increased stability.</text>
</comment>
<comment type="miscellaneous">
    <molecule>Isoform 2</molecule>
    <text evidence="15">This isoform is more stable than isoform 1 in cells undergoing apoptosis.</text>
</comment>
<comment type="similarity">
    <text evidence="15">Belongs to the Bcl-2 family.</text>
</comment>
<protein>
    <recommendedName>
        <fullName>Induced myeloid leukemia cell differentiation protein Mcl-1 homolog</fullName>
    </recommendedName>
    <alternativeName>
        <fullName>Bcl-2-related protein EAT/mcl1</fullName>
    </alternativeName>
</protein>